<gene>
    <name evidence="6" type="primary">accA-2</name>
    <name evidence="5" type="synonym">thaC</name>
    <name type="ordered locus">BTH_II1679</name>
</gene>
<name>ACCA2_BURTA</name>
<accession>Q2T4M6</accession>
<keyword id="KW-0046">Antibiotic resistance</keyword>
<keyword id="KW-0067">ATP-binding</keyword>
<keyword id="KW-0963">Cytoplasm</keyword>
<keyword id="KW-0275">Fatty acid biosynthesis</keyword>
<keyword id="KW-0276">Fatty acid metabolism</keyword>
<keyword id="KW-0436">Ligase</keyword>
<keyword id="KW-0444">Lipid biosynthesis</keyword>
<keyword id="KW-0443">Lipid metabolism</keyword>
<keyword id="KW-0547">Nucleotide-binding</keyword>
<keyword id="KW-0808">Transferase</keyword>
<reference key="1">
    <citation type="journal article" date="2005" name="BMC Genomics">
        <title>Bacterial genome adaptation to niches: divergence of the potential virulence genes in three Burkholderia species of different survival strategies.</title>
        <authorList>
            <person name="Kim H.S."/>
            <person name="Schell M.A."/>
            <person name="Yu Y."/>
            <person name="Ulrich R.L."/>
            <person name="Sarria S.H."/>
            <person name="Nierman W.C."/>
            <person name="DeShazer D."/>
        </authorList>
    </citation>
    <scope>NUCLEOTIDE SEQUENCE [LARGE SCALE GENOMIC DNA]</scope>
    <source>
        <strain>ATCC 700388 / DSM 13276 / CCUG 48851 / CIP 106301 / E264</strain>
    </source>
</reference>
<reference key="2">
    <citation type="journal article" date="2010" name="J. Am. Chem. Soc.">
        <title>Induced biosynthesis of cryptic polyketide metabolites in a Burkholderia thailandensis quorum sensing mutant.</title>
        <authorList>
            <person name="Ishida K."/>
            <person name="Lincke T."/>
            <person name="Behnken S."/>
            <person name="Hertweck C."/>
        </authorList>
    </citation>
    <scope>NOMENCLATURE</scope>
    <source>
        <strain>ATCC 700388 / DSM 13276 / CCUG 48851 / CIP 106301 / E264</strain>
    </source>
</reference>
<reference key="3">
    <citation type="journal article" date="2018" name="Antimicrob. Agents Chemother.">
        <title>Thailandamide, a Fatty Acid Synthesis Antibiotic That Is Coexpressed with a Resistant Target Gene.</title>
        <authorList>
            <person name="Wozniak C.E."/>
            <person name="Lin Z."/>
            <person name="Schmidt E.W."/>
            <person name="Hughes K.T."/>
            <person name="Liou T.G."/>
        </authorList>
    </citation>
    <scope>FUNCTION</scope>
    <scope>DISRUPTION PHENOTYPE</scope>
    <source>
        <strain>ATCC 700388 / DSM 13276 / CCUG 48851 / CIP 106301 / E264</strain>
    </source>
</reference>
<reference key="4">
    <citation type="journal article" date="2018" name="Biochemistry">
        <title>The Polyene Natural Product Thailandamide A Inhibits Fatty Acid Biosynthesis in Gram-Positive and Gram-Negative Bacteria.</title>
        <authorList>
            <person name="Wu Y."/>
            <person name="Seyedsayamdost M.R."/>
        </authorList>
    </citation>
    <scope>FUNCTION</scope>
    <source>
        <strain>ATCC 700388 / DSM 13276 / CCUG 48851 / CIP 106301 / E264</strain>
    </source>
</reference>
<proteinExistence type="inferred from homology"/>
<comment type="function">
    <text evidence="1">Component of the acetyl coenzyme A carboxylase (ACC) complex. First, biotin carboxylase catalyzes the carboxylation of biotin on its carrier protein (BCCP) and then the CO(2) group is transferred by the carboxyltransferase to acetyl-CoA to form malonyl-CoA.</text>
</comment>
<comment type="function">
    <text evidence="3 4">Confers resistance to the endogenous polyketide antibiotic thailandamide. Can replace the endogenous gene in S.typhimurium, conferring slow growth and resistance to thailandamide (PubMed:29914944). Can also replace the endogenous gene in E.coli, conferring resistance to thailandamide (PubMed:29975047).</text>
</comment>
<comment type="catalytic activity">
    <reaction evidence="1">
        <text>N(6)-carboxybiotinyl-L-lysyl-[protein] + acetyl-CoA = N(6)-biotinyl-L-lysyl-[protein] + malonyl-CoA</text>
        <dbReference type="Rhea" id="RHEA:54728"/>
        <dbReference type="Rhea" id="RHEA-COMP:10505"/>
        <dbReference type="Rhea" id="RHEA-COMP:10506"/>
        <dbReference type="ChEBI" id="CHEBI:57288"/>
        <dbReference type="ChEBI" id="CHEBI:57384"/>
        <dbReference type="ChEBI" id="CHEBI:83144"/>
        <dbReference type="ChEBI" id="CHEBI:83145"/>
        <dbReference type="EC" id="2.1.3.15"/>
    </reaction>
</comment>
<comment type="pathway">
    <text evidence="1">Lipid metabolism; malonyl-CoA biosynthesis; malonyl-CoA from acetyl-CoA: step 1/1.</text>
</comment>
<comment type="subunit">
    <text evidence="1">Acetyl-CoA carboxylase is a heterohexamer composed of biotin carboxyl carrier protein (AccB), biotin carboxylase (AccC) and two subunits each of ACCase subunit alpha (AccA) and ACCase subunit beta (AccD).</text>
</comment>
<comment type="subcellular location">
    <subcellularLocation>
        <location evidence="1">Cytoplasm</location>
    </subcellularLocation>
</comment>
<comment type="disruption phenotype">
    <text evidence="3">Becomes sensitive to thailandamide antibiotic.</text>
</comment>
<comment type="miscellaneous">
    <text evidence="7 8">Thailandamide is a polyketide that is toxic to human cell lines but also has antibacterial activity on E.coli, S.typhimurium and S.aureus. It probably acts on acetyl-CoA carboxylase in the fatty acid synthesis pathway, which is rarely found to be an antibiotic target. These data suggest it might be a good starting point for engineering of novel antibiotics.</text>
</comment>
<comment type="similarity">
    <text evidence="1">Belongs to the AccA family.</text>
</comment>
<sequence>MTNVTYLDFEKAIGELDAKIDALRCSEDESAIDLSEEINRLSARSEKLTKELYERLTPWQIVQVARHPARPYTLDYVNFIFTDFHELHGDRSYADDQSIVGGLARFNDRPCVVVGHQKGRNTKERAMRNFGYPRPEGYRKALRLFKLAEKFRLPIFTFIDTPGAWPGIDAEEHNQSEAIGRNLMEMASLQTPIITTVIGEGGSGGALAIGVGDVSIMLQFSTYSVISPESCSSILWKNPNYAEQAANALGLTAHRLKALGLIDKIANEPVGGAHRDPQQMALMLKRVLQESLRNVESLDAKQLLVRRHERLMHYGKFRETAV</sequence>
<dbReference type="EC" id="2.1.3.15" evidence="1"/>
<dbReference type="EMBL" id="CP000085">
    <property type="protein sequence ID" value="ABC35022.1"/>
    <property type="molecule type" value="Genomic_DNA"/>
</dbReference>
<dbReference type="RefSeq" id="WP_011401357.1">
    <property type="nucleotide sequence ID" value="NZ_CP008786.1"/>
</dbReference>
<dbReference type="SMR" id="Q2T4M6"/>
<dbReference type="GeneID" id="45119115"/>
<dbReference type="KEGG" id="bte:BTH_II1679"/>
<dbReference type="HOGENOM" id="CLU_015486_0_2_4"/>
<dbReference type="UniPathway" id="UPA00655">
    <property type="reaction ID" value="UER00711"/>
</dbReference>
<dbReference type="Proteomes" id="UP000001930">
    <property type="component" value="Chromosome II"/>
</dbReference>
<dbReference type="GO" id="GO:0009317">
    <property type="term" value="C:acetyl-CoA carboxylase complex"/>
    <property type="evidence" value="ECO:0007669"/>
    <property type="project" value="InterPro"/>
</dbReference>
<dbReference type="GO" id="GO:0003989">
    <property type="term" value="F:acetyl-CoA carboxylase activity"/>
    <property type="evidence" value="ECO:0007669"/>
    <property type="project" value="InterPro"/>
</dbReference>
<dbReference type="GO" id="GO:0005524">
    <property type="term" value="F:ATP binding"/>
    <property type="evidence" value="ECO:0007669"/>
    <property type="project" value="UniProtKB-KW"/>
</dbReference>
<dbReference type="GO" id="GO:0016743">
    <property type="term" value="F:carboxyl- or carbamoyltransferase activity"/>
    <property type="evidence" value="ECO:0007669"/>
    <property type="project" value="UniProtKB-UniRule"/>
</dbReference>
<dbReference type="GO" id="GO:0006633">
    <property type="term" value="P:fatty acid biosynthetic process"/>
    <property type="evidence" value="ECO:0007669"/>
    <property type="project" value="UniProtKB-KW"/>
</dbReference>
<dbReference type="GO" id="GO:2001295">
    <property type="term" value="P:malonyl-CoA biosynthetic process"/>
    <property type="evidence" value="ECO:0007669"/>
    <property type="project" value="UniProtKB-UniRule"/>
</dbReference>
<dbReference type="GO" id="GO:0046677">
    <property type="term" value="P:response to antibiotic"/>
    <property type="evidence" value="ECO:0007669"/>
    <property type="project" value="UniProtKB-KW"/>
</dbReference>
<dbReference type="Gene3D" id="3.90.226.10">
    <property type="entry name" value="2-enoyl-CoA Hydratase, Chain A, domain 1"/>
    <property type="match status" value="1"/>
</dbReference>
<dbReference type="HAMAP" id="MF_00823">
    <property type="entry name" value="AcetylCoA_CT_alpha"/>
    <property type="match status" value="1"/>
</dbReference>
<dbReference type="InterPro" id="IPR001095">
    <property type="entry name" value="Acetyl_CoA_COase_a_su"/>
</dbReference>
<dbReference type="InterPro" id="IPR029045">
    <property type="entry name" value="ClpP/crotonase-like_dom_sf"/>
</dbReference>
<dbReference type="InterPro" id="IPR011763">
    <property type="entry name" value="COA_CT_C"/>
</dbReference>
<dbReference type="NCBIfam" id="TIGR00513">
    <property type="entry name" value="accA"/>
    <property type="match status" value="1"/>
</dbReference>
<dbReference type="NCBIfam" id="NF041504">
    <property type="entry name" value="AccA_sub"/>
    <property type="match status" value="1"/>
</dbReference>
<dbReference type="NCBIfam" id="NF004344">
    <property type="entry name" value="PRK05724.1"/>
    <property type="match status" value="1"/>
</dbReference>
<dbReference type="PANTHER" id="PTHR42853">
    <property type="entry name" value="ACETYL-COENZYME A CARBOXYLASE CARBOXYL TRANSFERASE SUBUNIT ALPHA"/>
    <property type="match status" value="1"/>
</dbReference>
<dbReference type="PANTHER" id="PTHR42853:SF3">
    <property type="entry name" value="ACETYL-COENZYME A CARBOXYLASE CARBOXYL TRANSFERASE SUBUNIT ALPHA, CHLOROPLASTIC"/>
    <property type="match status" value="1"/>
</dbReference>
<dbReference type="Pfam" id="PF03255">
    <property type="entry name" value="ACCA"/>
    <property type="match status" value="1"/>
</dbReference>
<dbReference type="PRINTS" id="PR01069">
    <property type="entry name" value="ACCCTRFRASEA"/>
</dbReference>
<dbReference type="SUPFAM" id="SSF52096">
    <property type="entry name" value="ClpP/crotonase"/>
    <property type="match status" value="1"/>
</dbReference>
<dbReference type="PROSITE" id="PS50989">
    <property type="entry name" value="COA_CT_CTER"/>
    <property type="match status" value="1"/>
</dbReference>
<organism>
    <name type="scientific">Burkholderia thailandensis (strain ATCC 700388 / DSM 13276 / CCUG 48851 / CIP 106301 / E264)</name>
    <dbReference type="NCBI Taxonomy" id="271848"/>
    <lineage>
        <taxon>Bacteria</taxon>
        <taxon>Pseudomonadati</taxon>
        <taxon>Pseudomonadota</taxon>
        <taxon>Betaproteobacteria</taxon>
        <taxon>Burkholderiales</taxon>
        <taxon>Burkholderiaceae</taxon>
        <taxon>Burkholderia</taxon>
        <taxon>pseudomallei group</taxon>
    </lineage>
</organism>
<evidence type="ECO:0000255" key="1">
    <source>
        <dbReference type="HAMAP-Rule" id="MF_00823"/>
    </source>
</evidence>
<evidence type="ECO:0000255" key="2">
    <source>
        <dbReference type="PROSITE-ProRule" id="PRU01137"/>
    </source>
</evidence>
<evidence type="ECO:0000269" key="3">
    <source>
    </source>
</evidence>
<evidence type="ECO:0000269" key="4">
    <source>
    </source>
</evidence>
<evidence type="ECO:0000303" key="5">
    <source>
    </source>
</evidence>
<evidence type="ECO:0000303" key="6">
    <source>
    </source>
</evidence>
<evidence type="ECO:0000305" key="7">
    <source>
    </source>
</evidence>
<evidence type="ECO:0000305" key="8">
    <source>
    </source>
</evidence>
<feature type="chain" id="PRO_0000452509" description="Acetyl-coenzyme A carboxylase carboxyl transferase subunit alpha 2">
    <location>
        <begin position="1"/>
        <end position="322"/>
    </location>
</feature>
<feature type="domain" description="CoA carboxyltransferase C-terminal" evidence="2">
    <location>
        <begin position="37"/>
        <end position="294"/>
    </location>
</feature>
<protein>
    <recommendedName>
        <fullName evidence="1">Acetyl-coenzyme A carboxylase carboxyl transferase subunit alpha 2</fullName>
        <shortName evidence="1">ACCase subunit alpha 2</shortName>
        <shortName evidence="1">Acetyl-CoA carboxylase carboxyltransferase subunit alpha 2</shortName>
        <ecNumber evidence="1">2.1.3.15</ecNumber>
    </recommendedName>
</protein>